<feature type="chain" id="PRO_0000360736" description="Uncharacterized protein YkrK">
    <location>
        <begin position="1"/>
        <end position="233"/>
    </location>
</feature>
<name>YKRK_BACSU</name>
<accession>O31656</accession>
<dbReference type="EMBL" id="AL009126">
    <property type="protein sequence ID" value="CAB13221.1"/>
    <property type="molecule type" value="Genomic_DNA"/>
</dbReference>
<dbReference type="PIR" id="F69862">
    <property type="entry name" value="F69862"/>
</dbReference>
<dbReference type="SMR" id="O31656"/>
<dbReference type="FunCoup" id="O31656">
    <property type="interactions" value="15"/>
</dbReference>
<dbReference type="STRING" id="224308.BSU13480"/>
<dbReference type="jPOST" id="O31656"/>
<dbReference type="PaxDb" id="224308-BSU13480"/>
<dbReference type="EnsemblBacteria" id="CAB13221">
    <property type="protein sequence ID" value="CAB13221"/>
    <property type="gene ID" value="BSU_13480"/>
</dbReference>
<dbReference type="GeneID" id="939367"/>
<dbReference type="KEGG" id="bsu:BSU13480"/>
<dbReference type="PATRIC" id="fig|224308.179.peg.1463"/>
<dbReference type="eggNOG" id="ENOG502ZC9F">
    <property type="taxonomic scope" value="Bacteria"/>
</dbReference>
<dbReference type="InParanoid" id="O31656"/>
<dbReference type="OrthoDB" id="2351599at2"/>
<dbReference type="BioCyc" id="BSUB:BSU13480-MONOMER"/>
<dbReference type="Proteomes" id="UP000001570">
    <property type="component" value="Chromosome"/>
</dbReference>
<dbReference type="InterPro" id="IPR014975">
    <property type="entry name" value="DUF1836"/>
</dbReference>
<dbReference type="PANTHER" id="PTHR40056:SF1">
    <property type="entry name" value="DUF1836 DOMAIN-CONTAINING PROTEIN"/>
    <property type="match status" value="1"/>
</dbReference>
<dbReference type="PANTHER" id="PTHR40056">
    <property type="entry name" value="HYPOTHETICAL CYTOSOLIC PROTEIN"/>
    <property type="match status" value="1"/>
</dbReference>
<dbReference type="Pfam" id="PF08876">
    <property type="entry name" value="DUF1836"/>
    <property type="match status" value="1"/>
</dbReference>
<keyword id="KW-1185">Reference proteome</keyword>
<reference key="1">
    <citation type="journal article" date="1997" name="Nature">
        <title>The complete genome sequence of the Gram-positive bacterium Bacillus subtilis.</title>
        <authorList>
            <person name="Kunst F."/>
            <person name="Ogasawara N."/>
            <person name="Moszer I."/>
            <person name="Albertini A.M."/>
            <person name="Alloni G."/>
            <person name="Azevedo V."/>
            <person name="Bertero M.G."/>
            <person name="Bessieres P."/>
            <person name="Bolotin A."/>
            <person name="Borchert S."/>
            <person name="Borriss R."/>
            <person name="Boursier L."/>
            <person name="Brans A."/>
            <person name="Braun M."/>
            <person name="Brignell S.C."/>
            <person name="Bron S."/>
            <person name="Brouillet S."/>
            <person name="Bruschi C.V."/>
            <person name="Caldwell B."/>
            <person name="Capuano V."/>
            <person name="Carter N.M."/>
            <person name="Choi S.-K."/>
            <person name="Codani J.-J."/>
            <person name="Connerton I.F."/>
            <person name="Cummings N.J."/>
            <person name="Daniel R.A."/>
            <person name="Denizot F."/>
            <person name="Devine K.M."/>
            <person name="Duesterhoeft A."/>
            <person name="Ehrlich S.D."/>
            <person name="Emmerson P.T."/>
            <person name="Entian K.-D."/>
            <person name="Errington J."/>
            <person name="Fabret C."/>
            <person name="Ferrari E."/>
            <person name="Foulger D."/>
            <person name="Fritz C."/>
            <person name="Fujita M."/>
            <person name="Fujita Y."/>
            <person name="Fuma S."/>
            <person name="Galizzi A."/>
            <person name="Galleron N."/>
            <person name="Ghim S.-Y."/>
            <person name="Glaser P."/>
            <person name="Goffeau A."/>
            <person name="Golightly E.J."/>
            <person name="Grandi G."/>
            <person name="Guiseppi G."/>
            <person name="Guy B.J."/>
            <person name="Haga K."/>
            <person name="Haiech J."/>
            <person name="Harwood C.R."/>
            <person name="Henaut A."/>
            <person name="Hilbert H."/>
            <person name="Holsappel S."/>
            <person name="Hosono S."/>
            <person name="Hullo M.-F."/>
            <person name="Itaya M."/>
            <person name="Jones L.-M."/>
            <person name="Joris B."/>
            <person name="Karamata D."/>
            <person name="Kasahara Y."/>
            <person name="Klaerr-Blanchard M."/>
            <person name="Klein C."/>
            <person name="Kobayashi Y."/>
            <person name="Koetter P."/>
            <person name="Koningstein G."/>
            <person name="Krogh S."/>
            <person name="Kumano M."/>
            <person name="Kurita K."/>
            <person name="Lapidus A."/>
            <person name="Lardinois S."/>
            <person name="Lauber J."/>
            <person name="Lazarevic V."/>
            <person name="Lee S.-M."/>
            <person name="Levine A."/>
            <person name="Liu H."/>
            <person name="Masuda S."/>
            <person name="Mauel C."/>
            <person name="Medigue C."/>
            <person name="Medina N."/>
            <person name="Mellado R.P."/>
            <person name="Mizuno M."/>
            <person name="Moestl D."/>
            <person name="Nakai S."/>
            <person name="Noback M."/>
            <person name="Noone D."/>
            <person name="O'Reilly M."/>
            <person name="Ogawa K."/>
            <person name="Ogiwara A."/>
            <person name="Oudega B."/>
            <person name="Park S.-H."/>
            <person name="Parro V."/>
            <person name="Pohl T.M."/>
            <person name="Portetelle D."/>
            <person name="Porwollik S."/>
            <person name="Prescott A.M."/>
            <person name="Presecan E."/>
            <person name="Pujic P."/>
            <person name="Purnelle B."/>
            <person name="Rapoport G."/>
            <person name="Rey M."/>
            <person name="Reynolds S."/>
            <person name="Rieger M."/>
            <person name="Rivolta C."/>
            <person name="Rocha E."/>
            <person name="Roche B."/>
            <person name="Rose M."/>
            <person name="Sadaie Y."/>
            <person name="Sato T."/>
            <person name="Scanlan E."/>
            <person name="Schleich S."/>
            <person name="Schroeter R."/>
            <person name="Scoffone F."/>
            <person name="Sekiguchi J."/>
            <person name="Sekowska A."/>
            <person name="Seror S.J."/>
            <person name="Serror P."/>
            <person name="Shin B.-S."/>
            <person name="Soldo B."/>
            <person name="Sorokin A."/>
            <person name="Tacconi E."/>
            <person name="Takagi T."/>
            <person name="Takahashi H."/>
            <person name="Takemaru K."/>
            <person name="Takeuchi M."/>
            <person name="Tamakoshi A."/>
            <person name="Tanaka T."/>
            <person name="Terpstra P."/>
            <person name="Tognoni A."/>
            <person name="Tosato V."/>
            <person name="Uchiyama S."/>
            <person name="Vandenbol M."/>
            <person name="Vannier F."/>
            <person name="Vassarotti A."/>
            <person name="Viari A."/>
            <person name="Wambutt R."/>
            <person name="Wedler E."/>
            <person name="Wedler H."/>
            <person name="Weitzenegger T."/>
            <person name="Winters P."/>
            <person name="Wipat A."/>
            <person name="Yamamoto H."/>
            <person name="Yamane K."/>
            <person name="Yasumoto K."/>
            <person name="Yata K."/>
            <person name="Yoshida K."/>
            <person name="Yoshikawa H.-F."/>
            <person name="Zumstein E."/>
            <person name="Yoshikawa H."/>
            <person name="Danchin A."/>
        </authorList>
    </citation>
    <scope>NUCLEOTIDE SEQUENCE [LARGE SCALE GENOMIC DNA]</scope>
    <source>
        <strain>168</strain>
    </source>
</reference>
<sequence length="233" mass="26865">MNIFKLSRTDMVRLLYSLKGQGEHSPLDILVQSANMSAEKAANHLEIPEFLTRYERKKQKKEYGLSTNEIVELGNLCELTSLKSTAIQNWVKRDIKDLIGHPELGKKYSIEQAVILLIVRDLKSIYDFEHIRAILKVAFNTISDRSDDVISPIAYYESCAYVLDAIHHQDTPSMKESNLQEIAEQETERLRHRFEELNDSQWLKIRQIIAITVLSILTFHIQATAHKMTADIL</sequence>
<gene>
    <name type="primary">ykrK</name>
    <name type="ordered locus">BSU13480</name>
</gene>
<protein>
    <recommendedName>
        <fullName>Uncharacterized protein YkrK</fullName>
    </recommendedName>
</protein>
<organism>
    <name type="scientific">Bacillus subtilis (strain 168)</name>
    <dbReference type="NCBI Taxonomy" id="224308"/>
    <lineage>
        <taxon>Bacteria</taxon>
        <taxon>Bacillati</taxon>
        <taxon>Bacillota</taxon>
        <taxon>Bacilli</taxon>
        <taxon>Bacillales</taxon>
        <taxon>Bacillaceae</taxon>
        <taxon>Bacillus</taxon>
    </lineage>
</organism>
<proteinExistence type="predicted"/>